<keyword id="KW-0413">Isomerase</keyword>
<organism>
    <name type="scientific">Borreliella afzelii (strain PKo)</name>
    <name type="common">Borrelia afzelii</name>
    <dbReference type="NCBI Taxonomy" id="390236"/>
    <lineage>
        <taxon>Bacteria</taxon>
        <taxon>Pseudomonadati</taxon>
        <taxon>Spirochaetota</taxon>
        <taxon>Spirochaetia</taxon>
        <taxon>Spirochaetales</taxon>
        <taxon>Borreliaceae</taxon>
        <taxon>Borreliella</taxon>
    </lineage>
</organism>
<dbReference type="EC" id="5.3.1.6" evidence="1"/>
<dbReference type="EMBL" id="CP000395">
    <property type="protein sequence ID" value="ABH01932.1"/>
    <property type="molecule type" value="Genomic_DNA"/>
</dbReference>
<dbReference type="EMBL" id="CP002933">
    <property type="protein sequence ID" value="AEL69877.1"/>
    <property type="molecule type" value="Genomic_DNA"/>
</dbReference>
<dbReference type="RefSeq" id="WP_011601152.1">
    <property type="nucleotide sequence ID" value="NC_008277.1"/>
</dbReference>
<dbReference type="SMR" id="Q0SMJ6"/>
<dbReference type="STRING" id="29518.BLA32_00950"/>
<dbReference type="GeneID" id="77265510"/>
<dbReference type="KEGG" id="baf:BAPKO_0701"/>
<dbReference type="KEGG" id="bafz:BafPKo_0681"/>
<dbReference type="PATRIC" id="fig|390236.22.peg.650"/>
<dbReference type="eggNOG" id="COG0120">
    <property type="taxonomic scope" value="Bacteria"/>
</dbReference>
<dbReference type="HOGENOM" id="CLU_056590_1_1_12"/>
<dbReference type="OrthoDB" id="5870696at2"/>
<dbReference type="UniPathway" id="UPA00115">
    <property type="reaction ID" value="UER00412"/>
</dbReference>
<dbReference type="Proteomes" id="UP000005216">
    <property type="component" value="Chromosome"/>
</dbReference>
<dbReference type="GO" id="GO:0005829">
    <property type="term" value="C:cytosol"/>
    <property type="evidence" value="ECO:0007669"/>
    <property type="project" value="TreeGrafter"/>
</dbReference>
<dbReference type="GO" id="GO:0004751">
    <property type="term" value="F:ribose-5-phosphate isomerase activity"/>
    <property type="evidence" value="ECO:0007669"/>
    <property type="project" value="UniProtKB-UniRule"/>
</dbReference>
<dbReference type="GO" id="GO:0006014">
    <property type="term" value="P:D-ribose metabolic process"/>
    <property type="evidence" value="ECO:0007669"/>
    <property type="project" value="TreeGrafter"/>
</dbReference>
<dbReference type="GO" id="GO:0009052">
    <property type="term" value="P:pentose-phosphate shunt, non-oxidative branch"/>
    <property type="evidence" value="ECO:0007669"/>
    <property type="project" value="UniProtKB-UniRule"/>
</dbReference>
<dbReference type="CDD" id="cd01398">
    <property type="entry name" value="RPI_A"/>
    <property type="match status" value="1"/>
</dbReference>
<dbReference type="Gene3D" id="3.30.70.260">
    <property type="match status" value="1"/>
</dbReference>
<dbReference type="Gene3D" id="3.40.50.1360">
    <property type="match status" value="1"/>
</dbReference>
<dbReference type="HAMAP" id="MF_00170">
    <property type="entry name" value="Rib_5P_isom_A"/>
    <property type="match status" value="1"/>
</dbReference>
<dbReference type="InterPro" id="IPR037171">
    <property type="entry name" value="NagB/RpiA_transferase-like"/>
</dbReference>
<dbReference type="InterPro" id="IPR020672">
    <property type="entry name" value="Ribose5P_isomerase_typA_subgr"/>
</dbReference>
<dbReference type="InterPro" id="IPR004788">
    <property type="entry name" value="Ribose5P_isomerase_type_A"/>
</dbReference>
<dbReference type="NCBIfam" id="TIGR00021">
    <property type="entry name" value="rpiA"/>
    <property type="match status" value="1"/>
</dbReference>
<dbReference type="PANTHER" id="PTHR11934">
    <property type="entry name" value="RIBOSE-5-PHOSPHATE ISOMERASE"/>
    <property type="match status" value="1"/>
</dbReference>
<dbReference type="PANTHER" id="PTHR11934:SF0">
    <property type="entry name" value="RIBOSE-5-PHOSPHATE ISOMERASE"/>
    <property type="match status" value="1"/>
</dbReference>
<dbReference type="Pfam" id="PF06026">
    <property type="entry name" value="Rib_5-P_isom_A"/>
    <property type="match status" value="1"/>
</dbReference>
<dbReference type="SUPFAM" id="SSF75445">
    <property type="entry name" value="D-ribose-5-phosphate isomerase (RpiA), lid domain"/>
    <property type="match status" value="1"/>
</dbReference>
<dbReference type="SUPFAM" id="SSF100950">
    <property type="entry name" value="NagB/RpiA/CoA transferase-like"/>
    <property type="match status" value="1"/>
</dbReference>
<accession>Q0SMJ6</accession>
<accession>G0IQK7</accession>
<evidence type="ECO:0000255" key="1">
    <source>
        <dbReference type="HAMAP-Rule" id="MF_00170"/>
    </source>
</evidence>
<name>RPIA_BORAP</name>
<sequence>MENQKILVAKYAIDRYIKSNMNLGIGTGTTVYHAIKYLSEKLKSGNLKNLKFYTTSSDTKYLLSKEQIPYESNFSKLNKNLDIAIDGADEILLEKKSLIKGMGGAHLMEKVIAYNSETLLIIADETKIVKKLGTKMPIPIEVAPNAVGFIMTRLEEMNLDITLRICNEKKGPIITDNNNYILDVKMHVENPEGTEKYFKLFPGILEIGIFNHKNTKIVYYQNKQIKEA</sequence>
<proteinExistence type="inferred from homology"/>
<gene>
    <name evidence="1" type="primary">rpiA</name>
    <name type="ordered locus">BAPKO_0701</name>
    <name type="ordered locus">BafPKo_0681</name>
</gene>
<reference key="1">
    <citation type="journal article" date="2006" name="BMC Genomics">
        <title>Comparative genome analysis: selection pressure on the Borrelia vls cassettes is essential for infectivity.</title>
        <authorList>
            <person name="Gloeckner G."/>
            <person name="Schulte-Spechtel U."/>
            <person name="Schilhabel M."/>
            <person name="Felder M."/>
            <person name="Suehnel J."/>
            <person name="Wilske B."/>
            <person name="Platzer M."/>
        </authorList>
    </citation>
    <scope>NUCLEOTIDE SEQUENCE [LARGE SCALE GENOMIC DNA]</scope>
    <source>
        <strain>PKo</strain>
    </source>
</reference>
<reference key="2">
    <citation type="journal article" date="2011" name="J. Bacteriol.">
        <title>Whole-genome sequences of two Borrelia afzelii and two Borrelia garinii Lyme disease agent isolates.</title>
        <authorList>
            <person name="Casjens S.R."/>
            <person name="Mongodin E.F."/>
            <person name="Qiu W.G."/>
            <person name="Dunn J.J."/>
            <person name="Luft B.J."/>
            <person name="Fraser-Liggett C.M."/>
            <person name="Schutzer S.E."/>
        </authorList>
    </citation>
    <scope>NUCLEOTIDE SEQUENCE [LARGE SCALE GENOMIC DNA]</scope>
    <source>
        <strain>PKo</strain>
    </source>
</reference>
<protein>
    <recommendedName>
        <fullName evidence="1">Ribose-5-phosphate isomerase A</fullName>
        <ecNumber evidence="1">5.3.1.6</ecNumber>
    </recommendedName>
    <alternativeName>
        <fullName evidence="1">Phosphoriboisomerase A</fullName>
        <shortName evidence="1">PRI</shortName>
    </alternativeName>
</protein>
<feature type="chain" id="PRO_1000016905" description="Ribose-5-phosphate isomerase A">
    <location>
        <begin position="1"/>
        <end position="228"/>
    </location>
</feature>
<feature type="active site" description="Proton acceptor" evidence="1">
    <location>
        <position position="109"/>
    </location>
</feature>
<feature type="binding site" evidence="1">
    <location>
        <begin position="27"/>
        <end position="30"/>
    </location>
    <ligand>
        <name>substrate</name>
    </ligand>
</feature>
<feature type="binding site" evidence="1">
    <location>
        <begin position="86"/>
        <end position="89"/>
    </location>
    <ligand>
        <name>substrate</name>
    </ligand>
</feature>
<feature type="binding site" evidence="1">
    <location>
        <begin position="100"/>
        <end position="103"/>
    </location>
    <ligand>
        <name>substrate</name>
    </ligand>
</feature>
<feature type="binding site" evidence="1">
    <location>
        <position position="127"/>
    </location>
    <ligand>
        <name>substrate</name>
    </ligand>
</feature>
<comment type="function">
    <text evidence="1">Catalyzes the reversible conversion of ribose-5-phosphate to ribulose 5-phosphate.</text>
</comment>
<comment type="catalytic activity">
    <reaction evidence="1">
        <text>aldehydo-D-ribose 5-phosphate = D-ribulose 5-phosphate</text>
        <dbReference type="Rhea" id="RHEA:14657"/>
        <dbReference type="ChEBI" id="CHEBI:58121"/>
        <dbReference type="ChEBI" id="CHEBI:58273"/>
        <dbReference type="EC" id="5.3.1.6"/>
    </reaction>
</comment>
<comment type="pathway">
    <text evidence="1">Carbohydrate degradation; pentose phosphate pathway; D-ribose 5-phosphate from D-ribulose 5-phosphate (non-oxidative stage): step 1/1.</text>
</comment>
<comment type="subunit">
    <text evidence="1">Homodimer.</text>
</comment>
<comment type="similarity">
    <text evidence="1">Belongs to the ribose 5-phosphate isomerase family.</text>
</comment>